<dbReference type="EMBL" id="AL132959">
    <property type="protein sequence ID" value="CAB71093.1"/>
    <property type="molecule type" value="Genomic_DNA"/>
</dbReference>
<dbReference type="EMBL" id="CP002686">
    <property type="protein sequence ID" value="AEE80234.1"/>
    <property type="molecule type" value="Genomic_DNA"/>
</dbReference>
<dbReference type="EMBL" id="BX822244">
    <property type="status" value="NOT_ANNOTATED_CDS"/>
    <property type="molecule type" value="mRNA"/>
</dbReference>
<dbReference type="PIR" id="T47955">
    <property type="entry name" value="T47955"/>
</dbReference>
<dbReference type="RefSeq" id="NP_191722.1">
    <property type="nucleotide sequence ID" value="NM_116028.4"/>
</dbReference>
<dbReference type="SMR" id="Q9M374"/>
<dbReference type="BioGRID" id="10650">
    <property type="interactions" value="24"/>
</dbReference>
<dbReference type="FunCoup" id="Q9M374">
    <property type="interactions" value="13"/>
</dbReference>
<dbReference type="IntAct" id="Q9M374">
    <property type="interactions" value="21"/>
</dbReference>
<dbReference type="STRING" id="3702.Q9M374"/>
<dbReference type="GlyGen" id="Q9M374">
    <property type="glycosylation" value="2 sites"/>
</dbReference>
<dbReference type="PaxDb" id="3702-AT3G61630.1"/>
<dbReference type="EnsemblPlants" id="AT3G61630.1">
    <property type="protein sequence ID" value="AT3G61630.1"/>
    <property type="gene ID" value="AT3G61630"/>
</dbReference>
<dbReference type="GeneID" id="825336"/>
<dbReference type="Gramene" id="AT3G61630.1">
    <property type="protein sequence ID" value="AT3G61630.1"/>
    <property type="gene ID" value="AT3G61630"/>
</dbReference>
<dbReference type="KEGG" id="ath:AT3G61630"/>
<dbReference type="Araport" id="AT3G61630"/>
<dbReference type="TAIR" id="AT3G61630">
    <property type="gene designation" value="CRF6"/>
</dbReference>
<dbReference type="eggNOG" id="ENOG502RYD1">
    <property type="taxonomic scope" value="Eukaryota"/>
</dbReference>
<dbReference type="HOGENOM" id="CLU_062946_1_0_1"/>
<dbReference type="InParanoid" id="Q9M374"/>
<dbReference type="OMA" id="NLEHDYG"/>
<dbReference type="OrthoDB" id="610645at2759"/>
<dbReference type="PhylomeDB" id="Q9M374"/>
<dbReference type="PRO" id="PR:Q9M374"/>
<dbReference type="Proteomes" id="UP000006548">
    <property type="component" value="Chromosome 3"/>
</dbReference>
<dbReference type="ExpressionAtlas" id="Q9M374">
    <property type="expression patterns" value="baseline and differential"/>
</dbReference>
<dbReference type="GO" id="GO:0005737">
    <property type="term" value="C:cytoplasm"/>
    <property type="evidence" value="ECO:0000314"/>
    <property type="project" value="TAIR"/>
</dbReference>
<dbReference type="GO" id="GO:0005634">
    <property type="term" value="C:nucleus"/>
    <property type="evidence" value="ECO:0000314"/>
    <property type="project" value="TAIR"/>
</dbReference>
<dbReference type="GO" id="GO:0003700">
    <property type="term" value="F:DNA-binding transcription factor activity"/>
    <property type="evidence" value="ECO:0000250"/>
    <property type="project" value="TAIR"/>
</dbReference>
<dbReference type="GO" id="GO:0000976">
    <property type="term" value="F:transcription cis-regulatory region binding"/>
    <property type="evidence" value="ECO:0000353"/>
    <property type="project" value="TAIR"/>
</dbReference>
<dbReference type="GO" id="GO:0048825">
    <property type="term" value="P:cotyledon development"/>
    <property type="evidence" value="ECO:0000315"/>
    <property type="project" value="TAIR"/>
</dbReference>
<dbReference type="GO" id="GO:0009736">
    <property type="term" value="P:cytokinin-activated signaling pathway"/>
    <property type="evidence" value="ECO:0007669"/>
    <property type="project" value="UniProtKB-KW"/>
</dbReference>
<dbReference type="GO" id="GO:0009873">
    <property type="term" value="P:ethylene-activated signaling pathway"/>
    <property type="evidence" value="ECO:0007669"/>
    <property type="project" value="UniProtKB-KW"/>
</dbReference>
<dbReference type="GO" id="GO:0048366">
    <property type="term" value="P:leaf development"/>
    <property type="evidence" value="ECO:0000315"/>
    <property type="project" value="TAIR"/>
</dbReference>
<dbReference type="CDD" id="cd00018">
    <property type="entry name" value="AP2"/>
    <property type="match status" value="1"/>
</dbReference>
<dbReference type="FunFam" id="3.30.730.10:FF:000001">
    <property type="entry name" value="Ethylene-responsive transcription factor 2"/>
    <property type="match status" value="1"/>
</dbReference>
<dbReference type="Gene3D" id="3.30.730.10">
    <property type="entry name" value="AP2/ERF domain"/>
    <property type="match status" value="1"/>
</dbReference>
<dbReference type="InterPro" id="IPR001471">
    <property type="entry name" value="AP2/ERF_dom"/>
</dbReference>
<dbReference type="InterPro" id="IPR036955">
    <property type="entry name" value="AP2/ERF_dom_sf"/>
</dbReference>
<dbReference type="InterPro" id="IPR050913">
    <property type="entry name" value="AP2/ERF_ERF_subfamily"/>
</dbReference>
<dbReference type="InterPro" id="IPR016177">
    <property type="entry name" value="DNA-bd_dom_sf"/>
</dbReference>
<dbReference type="PANTHER" id="PTHR31194:SF152">
    <property type="entry name" value="ETHYLENE-RESPONSIVE TRANSCRIPTION FACTOR CRF5-RELATED"/>
    <property type="match status" value="1"/>
</dbReference>
<dbReference type="PANTHER" id="PTHR31194">
    <property type="entry name" value="SHN SHINE , DNA BINDING / TRANSCRIPTION FACTOR"/>
    <property type="match status" value="1"/>
</dbReference>
<dbReference type="Pfam" id="PF00847">
    <property type="entry name" value="AP2"/>
    <property type="match status" value="1"/>
</dbReference>
<dbReference type="PRINTS" id="PR00367">
    <property type="entry name" value="ETHRSPELEMNT"/>
</dbReference>
<dbReference type="SMART" id="SM00380">
    <property type="entry name" value="AP2"/>
    <property type="match status" value="1"/>
</dbReference>
<dbReference type="SUPFAM" id="SSF54171">
    <property type="entry name" value="DNA-binding domain"/>
    <property type="match status" value="1"/>
</dbReference>
<dbReference type="PROSITE" id="PS51032">
    <property type="entry name" value="AP2_ERF"/>
    <property type="match status" value="1"/>
</dbReference>
<protein>
    <recommendedName>
        <fullName>Ethylene-responsive transcription factor CRF6</fullName>
    </recommendedName>
    <alternativeName>
        <fullName>Protein CYTOKININ RESPONSE FACTOR 6</fullName>
    </alternativeName>
</protein>
<evidence type="ECO:0000250" key="1"/>
<evidence type="ECO:0000255" key="2">
    <source>
        <dbReference type="PROSITE-ProRule" id="PRU00366"/>
    </source>
</evidence>
<evidence type="ECO:0000269" key="3">
    <source>
    </source>
</evidence>
<evidence type="ECO:0000305" key="4"/>
<feature type="chain" id="PRO_0000290403" description="Ethylene-responsive transcription factor CRF6">
    <location>
        <begin position="1"/>
        <end position="315"/>
    </location>
</feature>
<feature type="DNA-binding region" description="AP2/ERF" evidence="2">
    <location>
        <begin position="104"/>
        <end position="161"/>
    </location>
</feature>
<feature type="sequence conflict" description="In Ref. 3; BX822244." evidence="4" ref="3">
    <original>R</original>
    <variation>S</variation>
    <location>
        <position position="61"/>
    </location>
</feature>
<feature type="sequence conflict" description="In Ref. 3; BX822244." evidence="4" ref="3">
    <original>H</original>
    <variation>N</variation>
    <location>
        <position position="312"/>
    </location>
</feature>
<name>CRF6_ARATH</name>
<organism>
    <name type="scientific">Arabidopsis thaliana</name>
    <name type="common">Mouse-ear cress</name>
    <dbReference type="NCBI Taxonomy" id="3702"/>
    <lineage>
        <taxon>Eukaryota</taxon>
        <taxon>Viridiplantae</taxon>
        <taxon>Streptophyta</taxon>
        <taxon>Embryophyta</taxon>
        <taxon>Tracheophyta</taxon>
        <taxon>Spermatophyta</taxon>
        <taxon>Magnoliopsida</taxon>
        <taxon>eudicotyledons</taxon>
        <taxon>Gunneridae</taxon>
        <taxon>Pentapetalae</taxon>
        <taxon>rosids</taxon>
        <taxon>malvids</taxon>
        <taxon>Brassicales</taxon>
        <taxon>Brassicaceae</taxon>
        <taxon>Camelineae</taxon>
        <taxon>Arabidopsis</taxon>
    </lineage>
</organism>
<accession>Q9M374</accession>
<keyword id="KW-0010">Activator</keyword>
<keyword id="KW-0932">Cytokinin signaling pathway</keyword>
<keyword id="KW-0963">Cytoplasm</keyword>
<keyword id="KW-0238">DNA-binding</keyword>
<keyword id="KW-0936">Ethylene signaling pathway</keyword>
<keyword id="KW-0539">Nucleus</keyword>
<keyword id="KW-1185">Reference proteome</keyword>
<keyword id="KW-0804">Transcription</keyword>
<keyword id="KW-0805">Transcription regulation</keyword>
<comment type="function">
    <text evidence="1 3">Component of the cytokinin signaling pathway involved in cotyledons, leaves, and embryos development. Probably acts as a transcriptional activator. Binds to the GCC-box pathogenesis-related promoter element. May be involved in the regulation of gene expression by stress factors and by components of stress signal transduction pathways (By similarity).</text>
</comment>
<comment type="interaction">
    <interactant intactId="EBI-5568101">
        <id>Q9M374</id>
    </interactant>
    <interactant intactId="EBI-5567273">
        <id>Q9SUQ2</id>
        <label>CRF2</label>
    </interactant>
    <organismsDiffer>false</organismsDiffer>
    <experiments>4</experiments>
</comment>
<comment type="interaction">
    <interactant intactId="EBI-5568101">
        <id>Q9M374</id>
    </interactant>
    <interactant intactId="EBI-5567993">
        <id>Q9FK12</id>
        <label>CRF3</label>
    </interactant>
    <organismsDiffer>false</organismsDiffer>
    <experiments>3</experiments>
</comment>
<comment type="interaction">
    <interactant intactId="EBI-5568101">
        <id>Q9M374</id>
    </interactant>
    <interactant intactId="EBI-5567027">
        <id>Q9SUE3</id>
        <label>CRF4</label>
    </interactant>
    <organismsDiffer>false</organismsDiffer>
    <experiments>4</experiments>
</comment>
<comment type="interaction">
    <interactant intactId="EBI-5568101">
        <id>Q9M374</id>
    </interactant>
    <interactant intactId="EBI-5567180">
        <id>O82339</id>
        <label>CRF5</label>
    </interactant>
    <organismsDiffer>false</organismsDiffer>
    <experiments>3</experiments>
</comment>
<comment type="interaction">
    <interactant intactId="EBI-5568101">
        <id>Q9M374</id>
    </interactant>
    <interactant intactId="EBI-5568301">
        <id>Q8W4I5</id>
        <label>ERF069</label>
    </interactant>
    <organismsDiffer>false</organismsDiffer>
    <experiments>3</experiments>
</comment>
<comment type="interaction">
    <interactant intactId="EBI-5568101">
        <id>Q9M374</id>
    </interactant>
    <interactant intactId="EBI-5568333">
        <id>Q9C995</id>
        <label>ERF070</label>
    </interactant>
    <organismsDiffer>false</organismsDiffer>
    <experiments>3</experiments>
</comment>
<comment type="subcellular location">
    <subcellularLocation>
        <location evidence="3">Cytoplasm</location>
    </subcellularLocation>
    <subcellularLocation>
        <location evidence="2 3">Nucleus</location>
    </subcellularLocation>
    <text>Relocalization from the cytoplasm into the nucleus is induced by cytokinins.</text>
</comment>
<comment type="induction">
    <text evidence="3">By cytokinins.</text>
</comment>
<comment type="similarity">
    <text evidence="4">Belongs to the AP2/ERF transcription factor family. ERF subfamily.</text>
</comment>
<proteinExistence type="evidence at protein level"/>
<reference key="1">
    <citation type="journal article" date="2000" name="Nature">
        <title>Sequence and analysis of chromosome 3 of the plant Arabidopsis thaliana.</title>
        <authorList>
            <person name="Salanoubat M."/>
            <person name="Lemcke K."/>
            <person name="Rieger M."/>
            <person name="Ansorge W."/>
            <person name="Unseld M."/>
            <person name="Fartmann B."/>
            <person name="Valle G."/>
            <person name="Bloecker H."/>
            <person name="Perez-Alonso M."/>
            <person name="Obermaier B."/>
            <person name="Delseny M."/>
            <person name="Boutry M."/>
            <person name="Grivell L.A."/>
            <person name="Mache R."/>
            <person name="Puigdomenech P."/>
            <person name="De Simone V."/>
            <person name="Choisne N."/>
            <person name="Artiguenave F."/>
            <person name="Robert C."/>
            <person name="Brottier P."/>
            <person name="Wincker P."/>
            <person name="Cattolico L."/>
            <person name="Weissenbach J."/>
            <person name="Saurin W."/>
            <person name="Quetier F."/>
            <person name="Schaefer M."/>
            <person name="Mueller-Auer S."/>
            <person name="Gabel C."/>
            <person name="Fuchs M."/>
            <person name="Benes V."/>
            <person name="Wurmbach E."/>
            <person name="Drzonek H."/>
            <person name="Erfle H."/>
            <person name="Jordan N."/>
            <person name="Bangert S."/>
            <person name="Wiedelmann R."/>
            <person name="Kranz H."/>
            <person name="Voss H."/>
            <person name="Holland R."/>
            <person name="Brandt P."/>
            <person name="Nyakatura G."/>
            <person name="Vezzi A."/>
            <person name="D'Angelo M."/>
            <person name="Pallavicini A."/>
            <person name="Toppo S."/>
            <person name="Simionati B."/>
            <person name="Conrad A."/>
            <person name="Hornischer K."/>
            <person name="Kauer G."/>
            <person name="Loehnert T.-H."/>
            <person name="Nordsiek G."/>
            <person name="Reichelt J."/>
            <person name="Scharfe M."/>
            <person name="Schoen O."/>
            <person name="Bargues M."/>
            <person name="Terol J."/>
            <person name="Climent J."/>
            <person name="Navarro P."/>
            <person name="Collado C."/>
            <person name="Perez-Perez A."/>
            <person name="Ottenwaelder B."/>
            <person name="Duchemin D."/>
            <person name="Cooke R."/>
            <person name="Laudie M."/>
            <person name="Berger-Llauro C."/>
            <person name="Purnelle B."/>
            <person name="Masuy D."/>
            <person name="de Haan M."/>
            <person name="Maarse A.C."/>
            <person name="Alcaraz J.-P."/>
            <person name="Cottet A."/>
            <person name="Casacuberta E."/>
            <person name="Monfort A."/>
            <person name="Argiriou A."/>
            <person name="Flores M."/>
            <person name="Liguori R."/>
            <person name="Vitale D."/>
            <person name="Mannhaupt G."/>
            <person name="Haase D."/>
            <person name="Schoof H."/>
            <person name="Rudd S."/>
            <person name="Zaccaria P."/>
            <person name="Mewes H.-W."/>
            <person name="Mayer K.F.X."/>
            <person name="Kaul S."/>
            <person name="Town C.D."/>
            <person name="Koo H.L."/>
            <person name="Tallon L.J."/>
            <person name="Jenkins J."/>
            <person name="Rooney T."/>
            <person name="Rizzo M."/>
            <person name="Walts A."/>
            <person name="Utterback T."/>
            <person name="Fujii C.Y."/>
            <person name="Shea T.P."/>
            <person name="Creasy T.H."/>
            <person name="Haas B."/>
            <person name="Maiti R."/>
            <person name="Wu D."/>
            <person name="Peterson J."/>
            <person name="Van Aken S."/>
            <person name="Pai G."/>
            <person name="Militscher J."/>
            <person name="Sellers P."/>
            <person name="Gill J.E."/>
            <person name="Feldblyum T.V."/>
            <person name="Preuss D."/>
            <person name="Lin X."/>
            <person name="Nierman W.C."/>
            <person name="Salzberg S.L."/>
            <person name="White O."/>
            <person name="Venter J.C."/>
            <person name="Fraser C.M."/>
            <person name="Kaneko T."/>
            <person name="Nakamura Y."/>
            <person name="Sato S."/>
            <person name="Kato T."/>
            <person name="Asamizu E."/>
            <person name="Sasamoto S."/>
            <person name="Kimura T."/>
            <person name="Idesawa K."/>
            <person name="Kawashima K."/>
            <person name="Kishida Y."/>
            <person name="Kiyokawa C."/>
            <person name="Kohara M."/>
            <person name="Matsumoto M."/>
            <person name="Matsuno A."/>
            <person name="Muraki A."/>
            <person name="Nakayama S."/>
            <person name="Nakazaki N."/>
            <person name="Shinpo S."/>
            <person name="Takeuchi C."/>
            <person name="Wada T."/>
            <person name="Watanabe A."/>
            <person name="Yamada M."/>
            <person name="Yasuda M."/>
            <person name="Tabata S."/>
        </authorList>
    </citation>
    <scope>NUCLEOTIDE SEQUENCE [LARGE SCALE GENOMIC DNA]</scope>
    <source>
        <strain>cv. Columbia</strain>
    </source>
</reference>
<reference key="2">
    <citation type="journal article" date="2017" name="Plant J.">
        <title>Araport11: a complete reannotation of the Arabidopsis thaliana reference genome.</title>
        <authorList>
            <person name="Cheng C.Y."/>
            <person name="Krishnakumar V."/>
            <person name="Chan A.P."/>
            <person name="Thibaud-Nissen F."/>
            <person name="Schobel S."/>
            <person name="Town C.D."/>
        </authorList>
    </citation>
    <scope>GENOME REANNOTATION</scope>
    <source>
        <strain>cv. Columbia</strain>
    </source>
</reference>
<reference key="3">
    <citation type="journal article" date="2004" name="Genome Res.">
        <title>Whole genome sequence comparisons and 'full-length' cDNA sequences: a combined approach to evaluate and improve Arabidopsis genome annotation.</title>
        <authorList>
            <person name="Castelli V."/>
            <person name="Aury J.-M."/>
            <person name="Jaillon O."/>
            <person name="Wincker P."/>
            <person name="Clepet C."/>
            <person name="Menard M."/>
            <person name="Cruaud C."/>
            <person name="Quetier F."/>
            <person name="Scarpelli C."/>
            <person name="Schaechter V."/>
            <person name="Temple G."/>
            <person name="Caboche M."/>
            <person name="Weissenbach J."/>
            <person name="Salanoubat M."/>
        </authorList>
    </citation>
    <scope>NUCLEOTIDE SEQUENCE [LARGE SCALE MRNA]</scope>
    <source>
        <strain>cv. Columbia</strain>
    </source>
</reference>
<reference key="4">
    <citation type="journal article" date="2006" name="Proc. Natl. Acad. Sci. U.S.A.">
        <title>A subset of Arabidopsis AP2 transcription factors mediates cytokinin responses in concert with a two-component pathway.</title>
        <authorList>
            <person name="Rashotte A.M."/>
            <person name="Mason M.G."/>
            <person name="Hutchison C.E."/>
            <person name="Ferreira F.J."/>
            <person name="Schaller G.E."/>
            <person name="Kieber J.J."/>
        </authorList>
    </citation>
    <scope>FUNCTION</scope>
    <scope>INDUCTION BY CYTOKININS</scope>
    <scope>SUBCELLULAR LOCATION</scope>
</reference>
<reference key="5">
    <citation type="journal article" date="2006" name="Plant Physiol.">
        <title>Genome-wide analysis of the ERF gene family in Arabidopsis and rice.</title>
        <authorList>
            <person name="Nakano T."/>
            <person name="Suzuki K."/>
            <person name="Fujimura T."/>
            <person name="Shinshi H."/>
        </authorList>
    </citation>
    <scope>GENE FAMILY</scope>
    <scope>NOMENCLATURE</scope>
</reference>
<sequence length="315" mass="35573">MERRTRRVKFTENRTVTNVAATPSNGSPRLVRITVTDPFATDSSSDDDDNNNVTVVPRVKRYVKEIRFCQGESSSSTAARKGKHKEEESVVVEDDVSTSVKPKKYRGVRQRPWGKFAAEIRDPSSRTRIWLGTFVTAEEAAIAYDRAAIHLKGPKALTNFLTPPTPTPVIDLQTVSACDYGRDSRQSLHSPTSVLRFNVNEETEHEIEAIELSPERKSTVIKEEEESSAGLVFPDPYLLPDLSLAGECFWDTEIAPDLLFLDEETKIQSTLLPNTEVSKQGENETEDFEFGLIDDFESSPWDVDHFFDHHHHSFD</sequence>
<gene>
    <name type="primary">CRF6</name>
    <name type="synonym">ERF067</name>
    <name type="ordered locus">At3g61630</name>
    <name type="ORF">F15G16.20</name>
</gene>